<proteinExistence type="inferred from homology"/>
<keyword id="KW-0029">Amino-acid transport</keyword>
<keyword id="KW-0998">Cell outer membrane</keyword>
<keyword id="KW-0406">Ion transport</keyword>
<keyword id="KW-0472">Membrane</keyword>
<keyword id="KW-0626">Porin</keyword>
<keyword id="KW-0732">Signal</keyword>
<keyword id="KW-0812">Transmembrane</keyword>
<keyword id="KW-1134">Transmembrane beta strand</keyword>
<keyword id="KW-0813">Transport</keyword>
<keyword id="KW-0843">Virulence</keyword>
<feature type="signal peptide" evidence="2">
    <location>
        <begin position="1"/>
        <end position="24"/>
    </location>
</feature>
<feature type="chain" id="PRO_0000363181" description="Porin AaxA">
    <location>
        <begin position="25"/>
        <end position="448"/>
    </location>
</feature>
<accession>Q5L5E8</accession>
<protein>
    <recommendedName>
        <fullName>Porin AaxA</fullName>
    </recommendedName>
    <alternativeName>
        <fullName>Outer membrane protein AaxA</fullName>
    </alternativeName>
</protein>
<comment type="function">
    <text evidence="1">Facilitates L-arginine uptake, as part of the AaxABC system. The arginine uptake by the bacterium in the macrophage may be a virulence factor against the host innate immune response (By similarity).</text>
</comment>
<comment type="subcellular location">
    <subcellularLocation>
        <location evidence="1">Cell outer membrane</location>
        <topology evidence="1">Multi-pass membrane protein</topology>
    </subcellularLocation>
</comment>
<comment type="similarity">
    <text evidence="3">Belongs to the OprB family.</text>
</comment>
<name>AAXA_CHLAB</name>
<organism>
    <name type="scientific">Chlamydia abortus (strain DSM 27085 / S26/3)</name>
    <name type="common">Chlamydophila abortus</name>
    <dbReference type="NCBI Taxonomy" id="218497"/>
    <lineage>
        <taxon>Bacteria</taxon>
        <taxon>Pseudomonadati</taxon>
        <taxon>Chlamydiota</taxon>
        <taxon>Chlamydiia</taxon>
        <taxon>Chlamydiales</taxon>
        <taxon>Chlamydiaceae</taxon>
        <taxon>Chlamydia/Chlamydophila group</taxon>
        <taxon>Chlamydia</taxon>
    </lineage>
</organism>
<gene>
    <name type="primary">aaxA</name>
    <name type="ordered locus">CAB696</name>
</gene>
<evidence type="ECO:0000250" key="1"/>
<evidence type="ECO:0000255" key="2"/>
<evidence type="ECO:0000305" key="3"/>
<reference key="1">
    <citation type="journal article" date="2005" name="Genome Res.">
        <title>The Chlamydophila abortus genome sequence reveals an array of variable proteins that contribute to interspecies variation.</title>
        <authorList>
            <person name="Thomson N.R."/>
            <person name="Yeats C."/>
            <person name="Bell K."/>
            <person name="Holden M.T.G."/>
            <person name="Bentley S.D."/>
            <person name="Livingstone M."/>
            <person name="Cerdeno-Tarraga A.-M."/>
            <person name="Harris B."/>
            <person name="Doggett J."/>
            <person name="Ormond D."/>
            <person name="Mungall K."/>
            <person name="Clarke K."/>
            <person name="Feltwell T."/>
            <person name="Hance Z."/>
            <person name="Sanders M."/>
            <person name="Quail M.A."/>
            <person name="Price C."/>
            <person name="Barrell B.G."/>
            <person name="Parkhill J."/>
            <person name="Longbottom D."/>
        </authorList>
    </citation>
    <scope>NUCLEOTIDE SEQUENCE [LARGE SCALE GENOMIC DNA]</scope>
    <source>
        <strain>DSM 27085 / S26/3</strain>
    </source>
</reference>
<dbReference type="EMBL" id="CR848038">
    <property type="protein sequence ID" value="CAH64143.1"/>
    <property type="molecule type" value="Genomic_DNA"/>
</dbReference>
<dbReference type="RefSeq" id="WP_011097271.1">
    <property type="nucleotide sequence ID" value="NC_004552.2"/>
</dbReference>
<dbReference type="KEGG" id="cab:CAB696"/>
<dbReference type="eggNOG" id="COG3659">
    <property type="taxonomic scope" value="Bacteria"/>
</dbReference>
<dbReference type="HOGENOM" id="CLU_619231_0_0_0"/>
<dbReference type="OrthoDB" id="18651at2"/>
<dbReference type="Proteomes" id="UP000001012">
    <property type="component" value="Chromosome"/>
</dbReference>
<dbReference type="GO" id="GO:0009279">
    <property type="term" value="C:cell outer membrane"/>
    <property type="evidence" value="ECO:0007669"/>
    <property type="project" value="UniProtKB-SubCell"/>
</dbReference>
<dbReference type="GO" id="GO:0046930">
    <property type="term" value="C:pore complex"/>
    <property type="evidence" value="ECO:0007669"/>
    <property type="project" value="UniProtKB-KW"/>
</dbReference>
<dbReference type="GO" id="GO:0015288">
    <property type="term" value="F:porin activity"/>
    <property type="evidence" value="ECO:0007669"/>
    <property type="project" value="UniProtKB-KW"/>
</dbReference>
<dbReference type="GO" id="GO:0006865">
    <property type="term" value="P:amino acid transport"/>
    <property type="evidence" value="ECO:0007669"/>
    <property type="project" value="UniProtKB-KW"/>
</dbReference>
<dbReference type="GO" id="GO:0008643">
    <property type="term" value="P:carbohydrate transport"/>
    <property type="evidence" value="ECO:0007669"/>
    <property type="project" value="InterPro"/>
</dbReference>
<dbReference type="GO" id="GO:0006811">
    <property type="term" value="P:monoatomic ion transport"/>
    <property type="evidence" value="ECO:0007669"/>
    <property type="project" value="UniProtKB-KW"/>
</dbReference>
<dbReference type="Gene3D" id="2.40.160.180">
    <property type="entry name" value="Carbohydrate-selective porin OprB"/>
    <property type="match status" value="1"/>
</dbReference>
<dbReference type="InterPro" id="IPR007049">
    <property type="entry name" value="Carb-sel_porin_OprB"/>
</dbReference>
<dbReference type="InterPro" id="IPR038673">
    <property type="entry name" value="OprB_sf"/>
</dbReference>
<dbReference type="Pfam" id="PF04966">
    <property type="entry name" value="OprB"/>
    <property type="match status" value="1"/>
</dbReference>
<sequence length="448" mass="50045">MASFRSSLLSALCAYGMMVMPAYAIDPNHPKLHHHKYSERLKKRHTEDSYLSSSSTLESSKTFAQEPRRHVLTPIRNVLADRPCEEGLSISKLFNSIEKETNSQISVDFTILPQWFYPKKGLLKAVDEKQPTWQFYVSPNVSWQLYNSPTAGVGSIDFSYTLVRYWRNNAQNANNAIGIAGGINDYSTRTNTLSQLTFSQTFPENILTISFGQYSLYSIDGTLYDNDQQSGFLSYALSQNASATYSSGSVGAYLQFTPTPSINIQAGFQDAYNVSGSSFDLYNLTRNRYNFYGYVSWAPQSSLGSGQYSALVYSTRKVPEQPVQTTGWSLNFGQHLGEKLYVFGRWNGATGTVTNLNRSYVLGLASANPINRNPQDLLGAACSMSKVNPKVITEKKIRKYETVIETFATIGFGPHISLTPDLQIYIHPARRPDKRAAKVYGVRANFST</sequence>